<proteinExistence type="inferred from homology"/>
<organism>
    <name type="scientific">Flavobacterium johnsoniae (strain ATCC 17061 / DSM 2064 / JCM 8514 / BCRC 14874 / CCUG 350202 / NBRC 14942 / NCIMB 11054 / UW101)</name>
    <name type="common">Cytophaga johnsonae</name>
    <dbReference type="NCBI Taxonomy" id="376686"/>
    <lineage>
        <taxon>Bacteria</taxon>
        <taxon>Pseudomonadati</taxon>
        <taxon>Bacteroidota</taxon>
        <taxon>Flavobacteriia</taxon>
        <taxon>Flavobacteriales</taxon>
        <taxon>Flavobacteriaceae</taxon>
        <taxon>Flavobacterium</taxon>
    </lineage>
</organism>
<feature type="chain" id="PRO_1000087377" description="dITP/XTP pyrophosphatase">
    <location>
        <begin position="1"/>
        <end position="192"/>
    </location>
</feature>
<feature type="active site" description="Proton acceptor" evidence="1">
    <location>
        <position position="68"/>
    </location>
</feature>
<feature type="binding site" evidence="1">
    <location>
        <begin position="7"/>
        <end position="12"/>
    </location>
    <ligand>
        <name>substrate</name>
    </ligand>
</feature>
<feature type="binding site" evidence="1">
    <location>
        <position position="68"/>
    </location>
    <ligand>
        <name>Mg(2+)</name>
        <dbReference type="ChEBI" id="CHEBI:18420"/>
    </ligand>
</feature>
<feature type="binding site" evidence="1">
    <location>
        <position position="69"/>
    </location>
    <ligand>
        <name>substrate</name>
    </ligand>
</feature>
<feature type="binding site" evidence="1">
    <location>
        <begin position="148"/>
        <end position="151"/>
    </location>
    <ligand>
        <name>substrate</name>
    </ligand>
</feature>
<feature type="binding site" evidence="1">
    <location>
        <position position="171"/>
    </location>
    <ligand>
        <name>substrate</name>
    </ligand>
</feature>
<feature type="binding site" evidence="1">
    <location>
        <begin position="176"/>
        <end position="177"/>
    </location>
    <ligand>
        <name>substrate</name>
    </ligand>
</feature>
<accession>A5FH89</accession>
<protein>
    <recommendedName>
        <fullName evidence="1">dITP/XTP pyrophosphatase</fullName>
        <ecNumber evidence="1">3.6.1.66</ecNumber>
    </recommendedName>
    <alternativeName>
        <fullName evidence="1">Non-canonical purine NTP pyrophosphatase</fullName>
    </alternativeName>
    <alternativeName>
        <fullName evidence="1">Non-standard purine NTP pyrophosphatase</fullName>
    </alternativeName>
    <alternativeName>
        <fullName evidence="1">Nucleoside-triphosphate diphosphatase</fullName>
    </alternativeName>
    <alternativeName>
        <fullName evidence="1">Nucleoside-triphosphate pyrophosphatase</fullName>
        <shortName evidence="1">NTPase</shortName>
    </alternativeName>
</protein>
<reference key="1">
    <citation type="journal article" date="2009" name="Appl. Environ. Microbiol.">
        <title>Novel features of the polysaccharide-digesting gliding bacterium Flavobacterium johnsoniae as revealed by genome sequence analysis.</title>
        <authorList>
            <person name="McBride M.J."/>
            <person name="Xie G."/>
            <person name="Martens E.C."/>
            <person name="Lapidus A."/>
            <person name="Henrissat B."/>
            <person name="Rhodes R.G."/>
            <person name="Goltsman E."/>
            <person name="Wang W."/>
            <person name="Xu J."/>
            <person name="Hunnicutt D.W."/>
            <person name="Staroscik A.M."/>
            <person name="Hoover T.R."/>
            <person name="Cheng Y.Q."/>
            <person name="Stein J.L."/>
        </authorList>
    </citation>
    <scope>NUCLEOTIDE SEQUENCE [LARGE SCALE GENOMIC DNA]</scope>
    <source>
        <strain>ATCC 17061 / DSM 2064 / JCM 8514 / BCRC 14874 / CCUG 350202 / NBRC 14942 / NCIMB 11054 / UW101</strain>
    </source>
</reference>
<gene>
    <name type="ordered locus">Fjoh_2403</name>
</gene>
<sequence>MKLVFASNNKNKIAEIQSMLPESITILSLEDINCFEDIPETADTIEGNAILKADYVTQKYGYDCFADDTGLEVDAINGEPGVYSARYAGEQKNADDNMNKLLKALENNKNRSAQFKTVITLNLEGKQYIFTGIAKGEITETKTGTNGFGYDPIFKPENFDKTFAELPLEIKNTIGHRGKAVQQLIDLLTATK</sequence>
<evidence type="ECO:0000255" key="1">
    <source>
        <dbReference type="HAMAP-Rule" id="MF_01405"/>
    </source>
</evidence>
<name>IXTPA_FLAJ1</name>
<dbReference type="EC" id="3.6.1.66" evidence="1"/>
<dbReference type="EMBL" id="CP000685">
    <property type="protein sequence ID" value="ABQ05430.1"/>
    <property type="molecule type" value="Genomic_DNA"/>
</dbReference>
<dbReference type="RefSeq" id="WP_012024469.1">
    <property type="nucleotide sequence ID" value="NC_009441.1"/>
</dbReference>
<dbReference type="SMR" id="A5FH89"/>
<dbReference type="STRING" id="376686.Fjoh_2403"/>
<dbReference type="KEGG" id="fjo:Fjoh_2403"/>
<dbReference type="eggNOG" id="COG0127">
    <property type="taxonomic scope" value="Bacteria"/>
</dbReference>
<dbReference type="HOGENOM" id="CLU_082080_0_2_10"/>
<dbReference type="OrthoDB" id="9807456at2"/>
<dbReference type="Proteomes" id="UP000006694">
    <property type="component" value="Chromosome"/>
</dbReference>
<dbReference type="GO" id="GO:0005829">
    <property type="term" value="C:cytosol"/>
    <property type="evidence" value="ECO:0007669"/>
    <property type="project" value="TreeGrafter"/>
</dbReference>
<dbReference type="GO" id="GO:0035870">
    <property type="term" value="F:dITP diphosphatase activity"/>
    <property type="evidence" value="ECO:0007669"/>
    <property type="project" value="RHEA"/>
</dbReference>
<dbReference type="GO" id="GO:0036220">
    <property type="term" value="F:ITP diphosphatase activity"/>
    <property type="evidence" value="ECO:0007669"/>
    <property type="project" value="UniProtKB-EC"/>
</dbReference>
<dbReference type="GO" id="GO:0046872">
    <property type="term" value="F:metal ion binding"/>
    <property type="evidence" value="ECO:0007669"/>
    <property type="project" value="UniProtKB-KW"/>
</dbReference>
<dbReference type="GO" id="GO:0000166">
    <property type="term" value="F:nucleotide binding"/>
    <property type="evidence" value="ECO:0007669"/>
    <property type="project" value="UniProtKB-KW"/>
</dbReference>
<dbReference type="GO" id="GO:0017111">
    <property type="term" value="F:ribonucleoside triphosphate phosphatase activity"/>
    <property type="evidence" value="ECO:0007669"/>
    <property type="project" value="InterPro"/>
</dbReference>
<dbReference type="GO" id="GO:0036222">
    <property type="term" value="F:XTP diphosphatase activity"/>
    <property type="evidence" value="ECO:0007669"/>
    <property type="project" value="RHEA"/>
</dbReference>
<dbReference type="GO" id="GO:0009117">
    <property type="term" value="P:nucleotide metabolic process"/>
    <property type="evidence" value="ECO:0007669"/>
    <property type="project" value="UniProtKB-KW"/>
</dbReference>
<dbReference type="GO" id="GO:0009146">
    <property type="term" value="P:purine nucleoside triphosphate catabolic process"/>
    <property type="evidence" value="ECO:0007669"/>
    <property type="project" value="UniProtKB-UniRule"/>
</dbReference>
<dbReference type="CDD" id="cd00515">
    <property type="entry name" value="HAM1"/>
    <property type="match status" value="1"/>
</dbReference>
<dbReference type="FunFam" id="3.90.950.10:FF:000001">
    <property type="entry name" value="dITP/XTP pyrophosphatase"/>
    <property type="match status" value="1"/>
</dbReference>
<dbReference type="Gene3D" id="3.90.950.10">
    <property type="match status" value="1"/>
</dbReference>
<dbReference type="HAMAP" id="MF_01405">
    <property type="entry name" value="Non_canon_purine_NTPase"/>
    <property type="match status" value="1"/>
</dbReference>
<dbReference type="InterPro" id="IPR020922">
    <property type="entry name" value="dITP/XTP_pyrophosphatase"/>
</dbReference>
<dbReference type="InterPro" id="IPR029001">
    <property type="entry name" value="ITPase-like_fam"/>
</dbReference>
<dbReference type="InterPro" id="IPR002637">
    <property type="entry name" value="RdgB/HAM1"/>
</dbReference>
<dbReference type="NCBIfam" id="NF011398">
    <property type="entry name" value="PRK14823.1"/>
    <property type="match status" value="1"/>
</dbReference>
<dbReference type="NCBIfam" id="TIGR00042">
    <property type="entry name" value="RdgB/HAM1 family non-canonical purine NTP pyrophosphatase"/>
    <property type="match status" value="1"/>
</dbReference>
<dbReference type="PANTHER" id="PTHR11067:SF9">
    <property type="entry name" value="INOSINE TRIPHOSPHATE PYROPHOSPHATASE"/>
    <property type="match status" value="1"/>
</dbReference>
<dbReference type="PANTHER" id="PTHR11067">
    <property type="entry name" value="INOSINE TRIPHOSPHATE PYROPHOSPHATASE/HAM1 PROTEIN"/>
    <property type="match status" value="1"/>
</dbReference>
<dbReference type="Pfam" id="PF01725">
    <property type="entry name" value="Ham1p_like"/>
    <property type="match status" value="1"/>
</dbReference>
<dbReference type="SUPFAM" id="SSF52972">
    <property type="entry name" value="ITPase-like"/>
    <property type="match status" value="1"/>
</dbReference>
<keyword id="KW-0378">Hydrolase</keyword>
<keyword id="KW-0460">Magnesium</keyword>
<keyword id="KW-0479">Metal-binding</keyword>
<keyword id="KW-0546">Nucleotide metabolism</keyword>
<keyword id="KW-0547">Nucleotide-binding</keyword>
<comment type="function">
    <text evidence="1">Pyrophosphatase that catalyzes the hydrolysis of nucleoside triphosphates to their monophosphate derivatives, with a high preference for the non-canonical purine nucleotides XTP (xanthosine triphosphate), dITP (deoxyinosine triphosphate) and ITP. Seems to function as a house-cleaning enzyme that removes non-canonical purine nucleotides from the nucleotide pool, thus preventing their incorporation into DNA/RNA and avoiding chromosomal lesions.</text>
</comment>
<comment type="catalytic activity">
    <reaction evidence="1">
        <text>XTP + H2O = XMP + diphosphate + H(+)</text>
        <dbReference type="Rhea" id="RHEA:28610"/>
        <dbReference type="ChEBI" id="CHEBI:15377"/>
        <dbReference type="ChEBI" id="CHEBI:15378"/>
        <dbReference type="ChEBI" id="CHEBI:33019"/>
        <dbReference type="ChEBI" id="CHEBI:57464"/>
        <dbReference type="ChEBI" id="CHEBI:61314"/>
        <dbReference type="EC" id="3.6.1.66"/>
    </reaction>
</comment>
<comment type="catalytic activity">
    <reaction evidence="1">
        <text>dITP + H2O = dIMP + diphosphate + H(+)</text>
        <dbReference type="Rhea" id="RHEA:28342"/>
        <dbReference type="ChEBI" id="CHEBI:15377"/>
        <dbReference type="ChEBI" id="CHEBI:15378"/>
        <dbReference type="ChEBI" id="CHEBI:33019"/>
        <dbReference type="ChEBI" id="CHEBI:61194"/>
        <dbReference type="ChEBI" id="CHEBI:61382"/>
        <dbReference type="EC" id="3.6.1.66"/>
    </reaction>
</comment>
<comment type="catalytic activity">
    <reaction evidence="1">
        <text>ITP + H2O = IMP + diphosphate + H(+)</text>
        <dbReference type="Rhea" id="RHEA:29399"/>
        <dbReference type="ChEBI" id="CHEBI:15377"/>
        <dbReference type="ChEBI" id="CHEBI:15378"/>
        <dbReference type="ChEBI" id="CHEBI:33019"/>
        <dbReference type="ChEBI" id="CHEBI:58053"/>
        <dbReference type="ChEBI" id="CHEBI:61402"/>
        <dbReference type="EC" id="3.6.1.66"/>
    </reaction>
</comment>
<comment type="cofactor">
    <cofactor evidence="1">
        <name>Mg(2+)</name>
        <dbReference type="ChEBI" id="CHEBI:18420"/>
    </cofactor>
    <text evidence="1">Binds 1 Mg(2+) ion per subunit.</text>
</comment>
<comment type="subunit">
    <text evidence="1">Homodimer.</text>
</comment>
<comment type="similarity">
    <text evidence="1">Belongs to the HAM1 NTPase family.</text>
</comment>